<reference key="1">
    <citation type="journal article" date="2004" name="Nat. Genet.">
        <title>Complete sequencing and characterization of 21,243 full-length human cDNAs.</title>
        <authorList>
            <person name="Ota T."/>
            <person name="Suzuki Y."/>
            <person name="Nishikawa T."/>
            <person name="Otsuki T."/>
            <person name="Sugiyama T."/>
            <person name="Irie R."/>
            <person name="Wakamatsu A."/>
            <person name="Hayashi K."/>
            <person name="Sato H."/>
            <person name="Nagai K."/>
            <person name="Kimura K."/>
            <person name="Makita H."/>
            <person name="Sekine M."/>
            <person name="Obayashi M."/>
            <person name="Nishi T."/>
            <person name="Shibahara T."/>
            <person name="Tanaka T."/>
            <person name="Ishii S."/>
            <person name="Yamamoto J."/>
            <person name="Saito K."/>
            <person name="Kawai Y."/>
            <person name="Isono Y."/>
            <person name="Nakamura Y."/>
            <person name="Nagahari K."/>
            <person name="Murakami K."/>
            <person name="Yasuda T."/>
            <person name="Iwayanagi T."/>
            <person name="Wagatsuma M."/>
            <person name="Shiratori A."/>
            <person name="Sudo H."/>
            <person name="Hosoiri T."/>
            <person name="Kaku Y."/>
            <person name="Kodaira H."/>
            <person name="Kondo H."/>
            <person name="Sugawara M."/>
            <person name="Takahashi M."/>
            <person name="Kanda K."/>
            <person name="Yokoi T."/>
            <person name="Furuya T."/>
            <person name="Kikkawa E."/>
            <person name="Omura Y."/>
            <person name="Abe K."/>
            <person name="Kamihara K."/>
            <person name="Katsuta N."/>
            <person name="Sato K."/>
            <person name="Tanikawa M."/>
            <person name="Yamazaki M."/>
            <person name="Ninomiya K."/>
            <person name="Ishibashi T."/>
            <person name="Yamashita H."/>
            <person name="Murakawa K."/>
            <person name="Fujimori K."/>
            <person name="Tanai H."/>
            <person name="Kimata M."/>
            <person name="Watanabe M."/>
            <person name="Hiraoka S."/>
            <person name="Chiba Y."/>
            <person name="Ishida S."/>
            <person name="Ono Y."/>
            <person name="Takiguchi S."/>
            <person name="Watanabe S."/>
            <person name="Yosida M."/>
            <person name="Hotuta T."/>
            <person name="Kusano J."/>
            <person name="Kanehori K."/>
            <person name="Takahashi-Fujii A."/>
            <person name="Hara H."/>
            <person name="Tanase T.-O."/>
            <person name="Nomura Y."/>
            <person name="Togiya S."/>
            <person name="Komai F."/>
            <person name="Hara R."/>
            <person name="Takeuchi K."/>
            <person name="Arita M."/>
            <person name="Imose N."/>
            <person name="Musashino K."/>
            <person name="Yuuki H."/>
            <person name="Oshima A."/>
            <person name="Sasaki N."/>
            <person name="Aotsuka S."/>
            <person name="Yoshikawa Y."/>
            <person name="Matsunawa H."/>
            <person name="Ichihara T."/>
            <person name="Shiohata N."/>
            <person name="Sano S."/>
            <person name="Moriya S."/>
            <person name="Momiyama H."/>
            <person name="Satoh N."/>
            <person name="Takami S."/>
            <person name="Terashima Y."/>
            <person name="Suzuki O."/>
            <person name="Nakagawa S."/>
            <person name="Senoh A."/>
            <person name="Mizoguchi H."/>
            <person name="Goto Y."/>
            <person name="Shimizu F."/>
            <person name="Wakebe H."/>
            <person name="Hishigaki H."/>
            <person name="Watanabe T."/>
            <person name="Sugiyama A."/>
            <person name="Takemoto M."/>
            <person name="Kawakami B."/>
            <person name="Yamazaki M."/>
            <person name="Watanabe K."/>
            <person name="Kumagai A."/>
            <person name="Itakura S."/>
            <person name="Fukuzumi Y."/>
            <person name="Fujimori Y."/>
            <person name="Komiyama M."/>
            <person name="Tashiro H."/>
            <person name="Tanigami A."/>
            <person name="Fujiwara T."/>
            <person name="Ono T."/>
            <person name="Yamada K."/>
            <person name="Fujii Y."/>
            <person name="Ozaki K."/>
            <person name="Hirao M."/>
            <person name="Ohmori Y."/>
            <person name="Kawabata A."/>
            <person name="Hikiji T."/>
            <person name="Kobatake N."/>
            <person name="Inagaki H."/>
            <person name="Ikema Y."/>
            <person name="Okamoto S."/>
            <person name="Okitani R."/>
            <person name="Kawakami T."/>
            <person name="Noguchi S."/>
            <person name="Itoh T."/>
            <person name="Shigeta K."/>
            <person name="Senba T."/>
            <person name="Matsumura K."/>
            <person name="Nakajima Y."/>
            <person name="Mizuno T."/>
            <person name="Morinaga M."/>
            <person name="Sasaki M."/>
            <person name="Togashi T."/>
            <person name="Oyama M."/>
            <person name="Hata H."/>
            <person name="Watanabe M."/>
            <person name="Komatsu T."/>
            <person name="Mizushima-Sugano J."/>
            <person name="Satoh T."/>
            <person name="Shirai Y."/>
            <person name="Takahashi Y."/>
            <person name="Nakagawa K."/>
            <person name="Okumura K."/>
            <person name="Nagase T."/>
            <person name="Nomura N."/>
            <person name="Kikuchi H."/>
            <person name="Masuho Y."/>
            <person name="Yamashita R."/>
            <person name="Nakai K."/>
            <person name="Yada T."/>
            <person name="Nakamura Y."/>
            <person name="Ohara O."/>
            <person name="Isogai T."/>
            <person name="Sugano S."/>
        </authorList>
    </citation>
    <scope>NUCLEOTIDE SEQUENCE [LARGE SCALE MRNA] (ISOFORM 2)</scope>
    <source>
        <tissue>Brain</tissue>
        <tissue>Tongue</tissue>
    </source>
</reference>
<reference key="2">
    <citation type="journal article" date="2006" name="Nature">
        <title>DNA sequence of human chromosome 17 and analysis of rearrangement in the human lineage.</title>
        <authorList>
            <person name="Zody M.C."/>
            <person name="Garber M."/>
            <person name="Adams D.J."/>
            <person name="Sharpe T."/>
            <person name="Harrow J."/>
            <person name="Lupski J.R."/>
            <person name="Nicholson C."/>
            <person name="Searle S.M."/>
            <person name="Wilming L."/>
            <person name="Young S.K."/>
            <person name="Abouelleil A."/>
            <person name="Allen N.R."/>
            <person name="Bi W."/>
            <person name="Bloom T."/>
            <person name="Borowsky M.L."/>
            <person name="Bugalter B.E."/>
            <person name="Butler J."/>
            <person name="Chang J.L."/>
            <person name="Chen C.-K."/>
            <person name="Cook A."/>
            <person name="Corum B."/>
            <person name="Cuomo C.A."/>
            <person name="de Jong P.J."/>
            <person name="DeCaprio D."/>
            <person name="Dewar K."/>
            <person name="FitzGerald M."/>
            <person name="Gilbert J."/>
            <person name="Gibson R."/>
            <person name="Gnerre S."/>
            <person name="Goldstein S."/>
            <person name="Grafham D.V."/>
            <person name="Grocock R."/>
            <person name="Hafez N."/>
            <person name="Hagopian D.S."/>
            <person name="Hart E."/>
            <person name="Norman C.H."/>
            <person name="Humphray S."/>
            <person name="Jaffe D.B."/>
            <person name="Jones M."/>
            <person name="Kamal M."/>
            <person name="Khodiyar V.K."/>
            <person name="LaButti K."/>
            <person name="Laird G."/>
            <person name="Lehoczky J."/>
            <person name="Liu X."/>
            <person name="Lokyitsang T."/>
            <person name="Loveland J."/>
            <person name="Lui A."/>
            <person name="Macdonald P."/>
            <person name="Major J.E."/>
            <person name="Matthews L."/>
            <person name="Mauceli E."/>
            <person name="McCarroll S.A."/>
            <person name="Mihalev A.H."/>
            <person name="Mudge J."/>
            <person name="Nguyen C."/>
            <person name="Nicol R."/>
            <person name="O'Leary S.B."/>
            <person name="Osoegawa K."/>
            <person name="Schwartz D.C."/>
            <person name="Shaw-Smith C."/>
            <person name="Stankiewicz P."/>
            <person name="Steward C."/>
            <person name="Swarbreck D."/>
            <person name="Venkataraman V."/>
            <person name="Whittaker C.A."/>
            <person name="Yang X."/>
            <person name="Zimmer A.R."/>
            <person name="Bradley A."/>
            <person name="Hubbard T."/>
            <person name="Birren B.W."/>
            <person name="Rogers J."/>
            <person name="Lander E.S."/>
            <person name="Nusbaum C."/>
        </authorList>
    </citation>
    <scope>NUCLEOTIDE SEQUENCE [LARGE SCALE GENOMIC DNA]</scope>
</reference>
<reference key="3">
    <citation type="submission" date="2005-07" db="EMBL/GenBank/DDBJ databases">
        <authorList>
            <person name="Mural R.J."/>
            <person name="Istrail S."/>
            <person name="Sutton G."/>
            <person name="Florea L."/>
            <person name="Halpern A.L."/>
            <person name="Mobarry C.M."/>
            <person name="Lippert R."/>
            <person name="Walenz B."/>
            <person name="Shatkay H."/>
            <person name="Dew I."/>
            <person name="Miller J.R."/>
            <person name="Flanigan M.J."/>
            <person name="Edwards N.J."/>
            <person name="Bolanos R."/>
            <person name="Fasulo D."/>
            <person name="Halldorsson B.V."/>
            <person name="Hannenhalli S."/>
            <person name="Turner R."/>
            <person name="Yooseph S."/>
            <person name="Lu F."/>
            <person name="Nusskern D.R."/>
            <person name="Shue B.C."/>
            <person name="Zheng X.H."/>
            <person name="Zhong F."/>
            <person name="Delcher A.L."/>
            <person name="Huson D.H."/>
            <person name="Kravitz S.A."/>
            <person name="Mouchard L."/>
            <person name="Reinert K."/>
            <person name="Remington K.A."/>
            <person name="Clark A.G."/>
            <person name="Waterman M.S."/>
            <person name="Eichler E.E."/>
            <person name="Adams M.D."/>
            <person name="Hunkapiller M.W."/>
            <person name="Myers E.W."/>
            <person name="Venter J.C."/>
        </authorList>
    </citation>
    <scope>NUCLEOTIDE SEQUENCE [LARGE SCALE GENOMIC DNA]</scope>
</reference>
<reference key="4">
    <citation type="journal article" date="2004" name="Genome Res.">
        <title>The status, quality, and expansion of the NIH full-length cDNA project: the Mammalian Gene Collection (MGC).</title>
        <authorList>
            <consortium name="The MGC Project Team"/>
        </authorList>
    </citation>
    <scope>NUCLEOTIDE SEQUENCE [LARGE SCALE MRNA] (ISOFORM 1)</scope>
    <source>
        <tissue>Brain</tissue>
    </source>
</reference>
<reference key="5">
    <citation type="journal article" date="2008" name="Proc. Natl. Acad. Sci. U.S.A.">
        <title>A quantitative atlas of mitotic phosphorylation.</title>
        <authorList>
            <person name="Dephoure N."/>
            <person name="Zhou C."/>
            <person name="Villen J."/>
            <person name="Beausoleil S.A."/>
            <person name="Bakalarski C.E."/>
            <person name="Elledge S.J."/>
            <person name="Gygi S.P."/>
        </authorList>
    </citation>
    <scope>PHOSPHORYLATION [LARGE SCALE ANALYSIS] AT SER-258; SER-260; THR-283; SER-285; THR-307; THR-310; SER-313; SER-320; SER-360 AND THR-440</scope>
    <scope>IDENTIFICATION BY MASS SPECTROMETRY [LARGE SCALE ANALYSIS]</scope>
    <source>
        <tissue>Cervix carcinoma</tissue>
    </source>
</reference>
<reference key="6">
    <citation type="journal article" date="2009" name="Anal. Chem.">
        <title>Lys-N and trypsin cover complementary parts of the phosphoproteome in a refined SCX-based approach.</title>
        <authorList>
            <person name="Gauci S."/>
            <person name="Helbig A.O."/>
            <person name="Slijper M."/>
            <person name="Krijgsveld J."/>
            <person name="Heck A.J."/>
            <person name="Mohammed S."/>
        </authorList>
    </citation>
    <scope>ACETYLATION [LARGE SCALE ANALYSIS] AT ALA-2</scope>
    <scope>CLEAVAGE OF INITIATOR METHIONINE [LARGE SCALE ANALYSIS]</scope>
    <scope>IDENTIFICATION BY MASS SPECTROMETRY [LARGE SCALE ANALYSIS]</scope>
</reference>
<reference key="7">
    <citation type="journal article" date="2009" name="Sci. Signal.">
        <title>Quantitative phosphoproteomic analysis of T cell receptor signaling reveals system-wide modulation of protein-protein interactions.</title>
        <authorList>
            <person name="Mayya V."/>
            <person name="Lundgren D.H."/>
            <person name="Hwang S.-I."/>
            <person name="Rezaul K."/>
            <person name="Wu L."/>
            <person name="Eng J.K."/>
            <person name="Rodionov V."/>
            <person name="Han D.K."/>
        </authorList>
    </citation>
    <scope>PHOSPHORYLATION [LARGE SCALE ANALYSIS] AT SER-258; SER-260; THR-307; SER-313; SER-320 AND THR-440</scope>
    <scope>IDENTIFICATION BY MASS SPECTROMETRY [LARGE SCALE ANALYSIS]</scope>
    <source>
        <tissue>Leukemic T-cell</tissue>
    </source>
</reference>
<reference key="8">
    <citation type="journal article" date="2010" name="Sci. Signal.">
        <title>Quantitative phosphoproteomics reveals widespread full phosphorylation site occupancy during mitosis.</title>
        <authorList>
            <person name="Olsen J.V."/>
            <person name="Vermeulen M."/>
            <person name="Santamaria A."/>
            <person name="Kumar C."/>
            <person name="Miller M.L."/>
            <person name="Jensen L.J."/>
            <person name="Gnad F."/>
            <person name="Cox J."/>
            <person name="Jensen T.S."/>
            <person name="Nigg E.A."/>
            <person name="Brunak S."/>
            <person name="Mann M."/>
        </authorList>
    </citation>
    <scope>ACETYLATION [LARGE SCALE ANALYSIS] AT ALA-2</scope>
    <scope>PHOSPHORYLATION [LARGE SCALE ANALYSIS] AT THR-10; SER-258 AND SER-260</scope>
    <scope>CLEAVAGE OF INITIATOR METHIONINE [LARGE SCALE ANALYSIS]</scope>
    <scope>IDENTIFICATION BY MASS SPECTROMETRY [LARGE SCALE ANALYSIS]</scope>
    <source>
        <tissue>Cervix carcinoma</tissue>
    </source>
</reference>
<reference key="9">
    <citation type="journal article" date="2011" name="BMC Syst. Biol.">
        <title>Initial characterization of the human central proteome.</title>
        <authorList>
            <person name="Burkard T.R."/>
            <person name="Planyavsky M."/>
            <person name="Kaupe I."/>
            <person name="Breitwieser F.P."/>
            <person name="Buerckstuemmer T."/>
            <person name="Bennett K.L."/>
            <person name="Superti-Furga G."/>
            <person name="Colinge J."/>
        </authorList>
    </citation>
    <scope>IDENTIFICATION BY MASS SPECTROMETRY [LARGE SCALE ANALYSIS]</scope>
</reference>
<reference key="10">
    <citation type="journal article" date="2011" name="Sci. Signal.">
        <title>System-wide temporal characterization of the proteome and phosphoproteome of human embryonic stem cell differentiation.</title>
        <authorList>
            <person name="Rigbolt K.T."/>
            <person name="Prokhorova T.A."/>
            <person name="Akimov V."/>
            <person name="Henningsen J."/>
            <person name="Johansen P.T."/>
            <person name="Kratchmarova I."/>
            <person name="Kassem M."/>
            <person name="Mann M."/>
            <person name="Olsen J.V."/>
            <person name="Blagoev B."/>
        </authorList>
    </citation>
    <scope>PHOSPHORYLATION [LARGE SCALE ANALYSIS] AT SER-26; SER-258; SER-260 AND SER-320</scope>
    <scope>IDENTIFICATION BY MASS SPECTROMETRY [LARGE SCALE ANALYSIS]</scope>
</reference>
<reference key="11">
    <citation type="journal article" date="2012" name="Proc. Natl. Acad. Sci. U.S.A.">
        <title>N-terminal acetylome analyses and functional insights of the N-terminal acetyltransferase NatB.</title>
        <authorList>
            <person name="Van Damme P."/>
            <person name="Lasa M."/>
            <person name="Polevoda B."/>
            <person name="Gazquez C."/>
            <person name="Elosegui-Artola A."/>
            <person name="Kim D.S."/>
            <person name="De Juan-Pardo E."/>
            <person name="Demeyer K."/>
            <person name="Hole K."/>
            <person name="Larrea E."/>
            <person name="Timmerman E."/>
            <person name="Prieto J."/>
            <person name="Arnesen T."/>
            <person name="Sherman F."/>
            <person name="Gevaert K."/>
            <person name="Aldabe R."/>
        </authorList>
    </citation>
    <scope>ACETYLATION [LARGE SCALE ANALYSIS] AT ALA-2</scope>
    <scope>CLEAVAGE OF INITIATOR METHIONINE [LARGE SCALE ANALYSIS]</scope>
    <scope>IDENTIFICATION BY MASS SPECTROMETRY [LARGE SCALE ANALYSIS]</scope>
</reference>
<reference key="12">
    <citation type="journal article" date="2013" name="Gene">
        <title>Novel genes FAM134C, C3orf10 and ENOX1 are regulated by NRF-1 and differentially regulate neurite outgrowth in neuroblastoma cells and hippocampal neurons.</title>
        <authorList>
            <person name="Wang J.L."/>
            <person name="Tong C.W."/>
            <person name="Chang W.T."/>
            <person name="Huang A.M."/>
        </authorList>
    </citation>
    <scope>FUNCTION</scope>
</reference>
<reference key="13">
    <citation type="journal article" date="2013" name="J. Proteome Res.">
        <title>Toward a comprehensive characterization of a human cancer cell phosphoproteome.</title>
        <authorList>
            <person name="Zhou H."/>
            <person name="Di Palma S."/>
            <person name="Preisinger C."/>
            <person name="Peng M."/>
            <person name="Polat A.N."/>
            <person name="Heck A.J."/>
            <person name="Mohammed S."/>
        </authorList>
    </citation>
    <scope>PHOSPHORYLATION [LARGE SCALE ANALYSIS] AT THR-10 AND SER-320</scope>
    <scope>IDENTIFICATION BY MASS SPECTROMETRY [LARGE SCALE ANALYSIS]</scope>
    <source>
        <tissue>Cervix carcinoma</tissue>
        <tissue>Erythroleukemia</tissue>
    </source>
</reference>
<reference key="14">
    <citation type="journal article" date="2014" name="J. Proteomics">
        <title>An enzyme assisted RP-RPLC approach for in-depth analysis of human liver phosphoproteome.</title>
        <authorList>
            <person name="Bian Y."/>
            <person name="Song C."/>
            <person name="Cheng K."/>
            <person name="Dong M."/>
            <person name="Wang F."/>
            <person name="Huang J."/>
            <person name="Sun D."/>
            <person name="Wang L."/>
            <person name="Ye M."/>
            <person name="Zou H."/>
        </authorList>
    </citation>
    <scope>PHOSPHORYLATION [LARGE SCALE ANALYSIS] AT THR-307; THR-310; SER-313 AND SER-320</scope>
    <scope>IDENTIFICATION BY MASS SPECTROMETRY [LARGE SCALE ANALYSIS]</scope>
    <source>
        <tissue>Liver</tissue>
    </source>
</reference>
<reference key="15">
    <citation type="journal article" date="2015" name="Nature">
        <title>Regulation of endoplasmic reticulum turnover by selective autophagy.</title>
        <authorList>
            <person name="Khaminets A."/>
            <person name="Heinrich T."/>
            <person name="Mari M."/>
            <person name="Grumati P."/>
            <person name="Huebner A.K."/>
            <person name="Akutsu M."/>
            <person name="Liebmann L."/>
            <person name="Stolz A."/>
            <person name="Nietzsche S."/>
            <person name="Koch N."/>
            <person name="Mauthe M."/>
            <person name="Katona I."/>
            <person name="Qualmann B."/>
            <person name="Weis J."/>
            <person name="Reggiori F."/>
            <person name="Kurth I."/>
            <person name="Huebner C.A."/>
            <person name="Dikic I."/>
        </authorList>
    </citation>
    <scope>INTERACTION WITH MAP1LC3A; MAP1LC3B; GABARAP AND GABARAPL1</scope>
    <scope>DOMAIN</scope>
</reference>
<reference key="16">
    <citation type="journal article" date="2021" name="EMBO Rep.">
        <title>Role of FAM134 paralogues in endoplasmic reticulum remodeling, ER-phagy, and Collagen quality control.</title>
        <authorList>
            <person name="Reggio A."/>
            <person name="Buonomo V."/>
            <person name="Berkane R."/>
            <person name="Bhaskara R.M."/>
            <person name="Tellechea M."/>
            <person name="Peluso I."/>
            <person name="Polishchuk E."/>
            <person name="Di Lorenzo G."/>
            <person name="Cirillo C."/>
            <person name="Esposito M."/>
            <person name="Hussain A."/>
            <person name="Huebner A.K."/>
            <person name="Huebner C.A."/>
            <person name="Settembre C."/>
            <person name="Hummer G."/>
            <person name="Grumati P."/>
            <person name="Stolz A."/>
        </authorList>
    </citation>
    <scope>FUNCTION</scope>
    <scope>INTERACTION WITH MAP1LC3A; MAP1LC3B; MAP1LC3C; GABARAP; GABARAPL1; GABARAPL2 AND CANX</scope>
    <scope>SUBCELLULAR LOCATION</scope>
    <scope>MUTAGENESIS OF 447-PHE--LEU-450</scope>
</reference>
<reference key="17">
    <citation type="journal article" date="2021" name="Mol. Biol. Cell">
        <title>RTN4B interacting protein FAM134C promotes ER membrane curvature and has a functional role in autophagy.</title>
        <authorList>
            <person name="Kumar D."/>
            <person name="Lak B."/>
            <person name="Suntio T."/>
            <person name="Vihinen H."/>
            <person name="Belevich I."/>
            <person name="Viita T."/>
            <person name="Xiaonan L."/>
            <person name="Vartiainen A."/>
            <person name="Vartiainen M."/>
            <person name="Varjosalo M."/>
            <person name="Jokitalo E."/>
        </authorList>
    </citation>
    <scope>FUNCTION</scope>
    <scope>INTERACTION WITH RTN4</scope>
    <scope>SUBCELLULAR LOCATION</scope>
    <scope>INDUCTION</scope>
    <scope>TOPOLOGY</scope>
    <scope>MUTAGENESIS OF 445-ASP--LEU-450</scope>
</reference>
<name>RETR3_HUMAN</name>
<comment type="function">
    <text evidence="1 4 5 6">Endoplasmic reticulum (ER)-anchored autophagy regulator which exists in an inactive state under basal conditions but is activated following cellular stress (PubMed:34338405). When activated, induces ER fragmentation and mediates ER delivery into lysosomes through sequestration into autophagosomes via interaction with ATG8 family proteins (PubMed:34338405). Promotes ER membrane curvature and ER tubulation required for subsequent ER fragmentation and engulfment into autophagosomes (PubMed:33826365). Required for collagen quality control in a LIR motif-dependent manner (By similarity). Mediates NRF1-enhanced neurite outgrowth (PubMed:26040720).</text>
</comment>
<comment type="subunit">
    <text evidence="4 5 6">Interacts with ATG8 family modifier proteins MAP1LC3A, MAP1LC3B, MAP1LC3C, GABARAP, GABARAPL1 and GABARAPL2 (PubMed:26040720, PubMed:34338405). Interacts with CANX (PubMed:34338405). Interacts with RTN4 isoform B (PubMed:33826365).</text>
</comment>
<comment type="interaction">
    <interactant intactId="EBI-10192441">
        <id>Q86VR2</id>
    </interactant>
    <interactant intactId="EBI-348517">
        <id>O95870</id>
        <label>ABHD16A</label>
    </interactant>
    <organismsDiffer>false</organismsDiffer>
    <experiments>7</experiments>
</comment>
<comment type="interaction">
    <interactant intactId="EBI-10192441">
        <id>Q86VR2</id>
    </interactant>
    <interactant intactId="EBI-2876927">
        <id>Q9ULC5</id>
        <label>ACSL5</label>
    </interactant>
    <organismsDiffer>false</organismsDiffer>
    <experiments>5</experiments>
</comment>
<comment type="interaction">
    <interactant intactId="EBI-10192441">
        <id>Q86VR2</id>
    </interactant>
    <interactant intactId="EBI-1754287">
        <id>Q9NRZ5</id>
        <label>AGPAT4</label>
    </interactant>
    <organismsDiffer>false</organismsDiffer>
    <experiments>3</experiments>
</comment>
<comment type="interaction">
    <interactant intactId="EBI-10192441">
        <id>Q86VR2</id>
    </interactant>
    <interactant intactId="EBI-11522760">
        <id>Q6RW13-2</id>
        <label>AGTRAP</label>
    </interactant>
    <organismsDiffer>false</organismsDiffer>
    <experiments>3</experiments>
</comment>
<comment type="interaction">
    <interactant intactId="EBI-10192441">
        <id>Q86VR2</id>
    </interactant>
    <interactant intactId="EBI-12109402">
        <id>Q86W74-2</id>
        <label>ANKRD46</label>
    </interactant>
    <organismsDiffer>false</organismsDiffer>
    <experiments>3</experiments>
</comment>
<comment type="interaction">
    <interactant intactId="EBI-10192441">
        <id>Q86VR2</id>
    </interactant>
    <interactant intactId="EBI-714543">
        <id>Q15041</id>
        <label>ARL6IP1</label>
    </interactant>
    <organismsDiffer>false</organismsDiffer>
    <experiments>7</experiments>
</comment>
<comment type="interaction">
    <interactant intactId="EBI-10192441">
        <id>Q86VR2</id>
    </interactant>
    <interactant intactId="EBI-351829">
        <id>O15145</id>
        <label>ARPC3</label>
    </interactant>
    <organismsDiffer>false</organismsDiffer>
    <experiments>5</experiments>
</comment>
<comment type="interaction">
    <interactant intactId="EBI-10192441">
        <id>Q86VR2</id>
    </interactant>
    <interactant intactId="EBI-721179">
        <id>P27449</id>
        <label>ATP6V0C</label>
    </interactant>
    <organismsDiffer>false</organismsDiffer>
    <experiments>4</experiments>
</comment>
<comment type="interaction">
    <interactant intactId="EBI-10192441">
        <id>Q86VR2</id>
    </interactant>
    <interactant intactId="EBI-749204">
        <id>O15155</id>
        <label>BET1</label>
    </interactant>
    <organismsDiffer>false</organismsDiffer>
    <experiments>3</experiments>
</comment>
<comment type="interaction">
    <interactant intactId="EBI-10192441">
        <id>Q86VR2</id>
    </interactant>
    <interactant intactId="EBI-4402847">
        <id>Q12981</id>
        <label>BNIP1</label>
    </interactant>
    <organismsDiffer>false</organismsDiffer>
    <experiments>3</experiments>
</comment>
<comment type="interaction">
    <interactant intactId="EBI-10192441">
        <id>Q86VR2</id>
    </interactant>
    <interactant intactId="EBI-12003442">
        <id>Q8WVX3-2</id>
        <label>C4orf3</label>
    </interactant>
    <organismsDiffer>false</organismsDiffer>
    <experiments>3</experiments>
</comment>
<comment type="interaction">
    <interactant intactId="EBI-10192441">
        <id>Q86VR2</id>
    </interactant>
    <interactant intactId="EBI-9083477">
        <id>Q9P0B6</id>
        <label>CCDC167</label>
    </interactant>
    <organismsDiffer>false</organismsDiffer>
    <experiments>3</experiments>
</comment>
<comment type="interaction">
    <interactant intactId="EBI-10192441">
        <id>Q86VR2</id>
    </interactant>
    <interactant intactId="EBI-10271156">
        <id>Q8NHW4</id>
        <label>CCL4L2</label>
    </interactant>
    <organismsDiffer>false</organismsDiffer>
    <experiments>3</experiments>
</comment>
<comment type="interaction">
    <interactant intactId="EBI-10192441">
        <id>Q86VR2</id>
    </interactant>
    <interactant intactId="EBI-358858">
        <id>O14735</id>
        <label>CDIPT</label>
    </interactant>
    <organismsDiffer>false</organismsDiffer>
    <experiments>3</experiments>
</comment>
<comment type="interaction">
    <interactant intactId="EBI-10192441">
        <id>Q86VR2</id>
    </interactant>
    <interactant intactId="EBI-13295305">
        <id>Q92903</id>
        <label>CDS1</label>
    </interactant>
    <organismsDiffer>false</organismsDiffer>
    <experiments>3</experiments>
</comment>
<comment type="interaction">
    <interactant intactId="EBI-10192441">
        <id>Q86VR2</id>
    </interactant>
    <interactant intactId="EBI-7247651">
        <id>Q96MX0</id>
        <label>CMTM3</label>
    </interactant>
    <organismsDiffer>false</organismsDiffer>
    <experiments>3</experiments>
</comment>
<comment type="interaction">
    <interactant intactId="EBI-10192441">
        <id>Q86VR2</id>
    </interactant>
    <interactant intactId="EBI-11522780">
        <id>Q96DZ9-2</id>
        <label>CMTM5</label>
    </interactant>
    <organismsDiffer>false</organismsDiffer>
    <experiments>3</experiments>
</comment>
<comment type="interaction">
    <interactant intactId="EBI-10192441">
        <id>Q86VR2</id>
    </interactant>
    <interactant intactId="EBI-2807956">
        <id>Q96FZ5</id>
        <label>CMTM7</label>
    </interactant>
    <organismsDiffer>false</organismsDiffer>
    <experiments>5</experiments>
</comment>
<comment type="interaction">
    <interactant intactId="EBI-10192441">
        <id>Q86VR2</id>
    </interactant>
    <interactant intactId="EBI-10267100">
        <id>Q8N6G5</id>
        <label>CSGALNACT2</label>
    </interactant>
    <organismsDiffer>false</organismsDiffer>
    <experiments>3</experiments>
</comment>
<comment type="interaction">
    <interactant intactId="EBI-10192441">
        <id>Q86VR2</id>
    </interactant>
    <interactant intactId="EBI-1058710">
        <id>O43169</id>
        <label>CYB5B</label>
    </interactant>
    <organismsDiffer>false</organismsDiffer>
    <experiments>3</experiments>
</comment>
<comment type="interaction">
    <interactant intactId="EBI-10192441">
        <id>Q86VR2</id>
    </interactant>
    <interactant intactId="EBI-1752413">
        <id>P78329</id>
        <label>CYP4F2</label>
    </interactant>
    <organismsDiffer>false</organismsDiffer>
    <experiments>3</experiments>
</comment>
<comment type="interaction">
    <interactant intactId="EBI-10192441">
        <id>Q86VR2</id>
    </interactant>
    <interactant intactId="EBI-398977">
        <id>Q9BUN8</id>
        <label>DERL1</label>
    </interactant>
    <organismsDiffer>false</organismsDiffer>
    <experiments>3</experiments>
</comment>
<comment type="interaction">
    <interactant intactId="EBI-10192441">
        <id>Q86VR2</id>
    </interactant>
    <interactant intactId="EBI-3923585">
        <id>Q8N5I4</id>
        <label>DHRSX</label>
    </interactant>
    <organismsDiffer>false</organismsDiffer>
    <experiments>3</experiments>
</comment>
<comment type="interaction">
    <interactant intactId="EBI-10192441">
        <id>Q86VR2</id>
    </interactant>
    <interactant intactId="EBI-711490">
        <id>Q9UKR5</id>
        <label>ERG28</label>
    </interactant>
    <organismsDiffer>false</organismsDiffer>
    <experiments>3</experiments>
</comment>
<comment type="interaction">
    <interactant intactId="EBI-10192441">
        <id>Q86VR2</id>
    </interactant>
    <interactant intactId="EBI-12142299">
        <id>Q96IV6</id>
        <label>FAXDC2</label>
    </interactant>
    <organismsDiffer>false</organismsDiffer>
    <experiments>3</experiments>
</comment>
<comment type="interaction">
    <interactant intactId="EBI-10192441">
        <id>Q86VR2</id>
    </interactant>
    <interactant intactId="EBI-12887376">
        <id>Q96LL3</id>
        <label>FIMP</label>
    </interactant>
    <organismsDiffer>false</organismsDiffer>
    <experiments>3</experiments>
</comment>
<comment type="interaction">
    <interactant intactId="EBI-10192441">
        <id>Q86VR2</id>
    </interactant>
    <interactant intactId="EBI-724839">
        <id>Q14318</id>
        <label>FKBP8</label>
    </interactant>
    <organismsDiffer>false</organismsDiffer>
    <experiments>3</experiments>
</comment>
<comment type="interaction">
    <interactant intactId="EBI-10192441">
        <id>Q86VR2</id>
    </interactant>
    <interactant intactId="EBI-714482">
        <id>Q9BWH2</id>
        <label>FUNDC2</label>
    </interactant>
    <organismsDiffer>false</organismsDiffer>
    <experiments>3</experiments>
</comment>
<comment type="interaction">
    <interactant intactId="EBI-10192441">
        <id>Q86VR2</id>
    </interactant>
    <interactant intactId="EBI-746969">
        <id>Q9H0R8</id>
        <label>GABARAPL1</label>
    </interactant>
    <organismsDiffer>false</organismsDiffer>
    <experiments>8</experiments>
</comment>
<comment type="interaction">
    <interactant intactId="EBI-10192441">
        <id>Q86VR2</id>
    </interactant>
    <interactant intactId="EBI-720116">
        <id>P60520</id>
        <label>GABARAPL2</label>
    </interactant>
    <organismsDiffer>false</organismsDiffer>
    <experiments>3</experiments>
</comment>
<comment type="interaction">
    <interactant intactId="EBI-10192441">
        <id>Q86VR2</id>
    </interactant>
    <interactant intactId="EBI-6166686">
        <id>Q96F15</id>
        <label>GIMAP5</label>
    </interactant>
    <organismsDiffer>false</organismsDiffer>
    <experiments>5</experiments>
</comment>
<comment type="interaction">
    <interactant intactId="EBI-10192441">
        <id>Q86VR2</id>
    </interactant>
    <interactant intactId="EBI-4401517">
        <id>O14653</id>
        <label>GOSR2</label>
    </interactant>
    <organismsDiffer>false</organismsDiffer>
    <experiments>3</experiments>
</comment>
<comment type="interaction">
    <interactant intactId="EBI-10192441">
        <id>Q86VR2</id>
    </interactant>
    <interactant intactId="EBI-712096">
        <id>P30519</id>
        <label>HMOX2</label>
    </interactant>
    <organismsDiffer>false</organismsDiffer>
    <experiments>3</experiments>
</comment>
<comment type="interaction">
    <interactant intactId="EBI-10192441">
        <id>Q86VR2</id>
    </interactant>
    <interactant intactId="EBI-12937691">
        <id>Q9BUP3-3</id>
        <label>HTATIP2</label>
    </interactant>
    <organismsDiffer>false</organismsDiffer>
    <experiments>3</experiments>
</comment>
<comment type="interaction">
    <interactant intactId="EBI-10192441">
        <id>Q86VR2</id>
    </interactant>
    <interactant intactId="EBI-7932862">
        <id>Q01628</id>
        <label>IFITM3</label>
    </interactant>
    <organismsDiffer>false</organismsDiffer>
    <experiments>4</experiments>
</comment>
<comment type="interaction">
    <interactant intactId="EBI-10192441">
        <id>Q86VR2</id>
    </interactant>
    <interactant intactId="EBI-10266796">
        <id>Q8N5M9</id>
        <label>JAGN1</label>
    </interactant>
    <organismsDiffer>false</organismsDiffer>
    <experiments>3</experiments>
</comment>
<comment type="interaction">
    <interactant intactId="EBI-10192441">
        <id>Q86VR2</id>
    </interactant>
    <interactant intactId="EBI-12268900">
        <id>Q68G75</id>
        <label>LEMD1</label>
    </interactant>
    <organismsDiffer>false</organismsDiffer>
    <experiments>3</experiments>
</comment>
<comment type="interaction">
    <interactant intactId="EBI-10192441">
        <id>Q86VR2</id>
    </interactant>
    <interactant intactId="EBI-12033434">
        <id>Q9UBY5</id>
        <label>LPAR3</label>
    </interactant>
    <organismsDiffer>false</organismsDiffer>
    <experiments>5</experiments>
</comment>
<comment type="interaction">
    <interactant intactId="EBI-10192441">
        <id>Q86VR2</id>
    </interactant>
    <interactant intactId="EBI-4280011">
        <id>Q7L5N7</id>
        <label>LPCAT2</label>
    </interactant>
    <organismsDiffer>false</organismsDiffer>
    <experiments>3</experiments>
</comment>
<comment type="interaction">
    <interactant intactId="EBI-10192441">
        <id>Q86VR2</id>
    </interactant>
    <interactant intactId="EBI-718707">
        <id>O75427</id>
        <label>LRCH4</label>
    </interactant>
    <organismsDiffer>false</organismsDiffer>
    <experiments>3</experiments>
</comment>
<comment type="interaction">
    <interactant intactId="EBI-10192441">
        <id>Q86VR2</id>
    </interactant>
    <interactant intactId="EBI-944295">
        <id>Q969L2</id>
        <label>MAL2</label>
    </interactant>
    <organismsDiffer>false</organismsDiffer>
    <experiments>3</experiments>
</comment>
<comment type="interaction">
    <interactant intactId="EBI-10192441">
        <id>Q86VR2</id>
    </interactant>
    <interactant intactId="EBI-750078">
        <id>Q13021</id>
        <label>MALL</label>
    </interactant>
    <organismsDiffer>false</organismsDiffer>
    <experiments>3</experiments>
</comment>
<comment type="interaction">
    <interactant intactId="EBI-10192441">
        <id>Q86VR2</id>
    </interactant>
    <interactant intactId="EBI-720768">
        <id>Q9H492</id>
        <label>MAP1LC3A</label>
    </interactant>
    <organismsDiffer>false</organismsDiffer>
    <experiments>9</experiments>
</comment>
<comment type="interaction">
    <interactant intactId="EBI-10192441">
        <id>Q86VR2</id>
    </interactant>
    <interactant intactId="EBI-348259">
        <id>Q96EZ8</id>
        <label>MCRS1</label>
    </interactant>
    <organismsDiffer>false</organismsDiffer>
    <experiments>3</experiments>
</comment>
<comment type="interaction">
    <interactant intactId="EBI-10192441">
        <id>Q86VR2</id>
    </interactant>
    <interactant intactId="EBI-11956541">
        <id>Q9GZY8-5</id>
        <label>MFF</label>
    </interactant>
    <organismsDiffer>false</organismsDiffer>
    <experiments>3</experiments>
</comment>
<comment type="interaction">
    <interactant intactId="EBI-10192441">
        <id>Q86VR2</id>
    </interactant>
    <interactant intactId="EBI-2558739">
        <id>Q70IA6</id>
        <label>MOB2</label>
    </interactant>
    <organismsDiffer>false</organismsDiffer>
    <experiments>3</experiments>
</comment>
<comment type="interaction">
    <interactant intactId="EBI-10192441">
        <id>Q86VR2</id>
    </interactant>
    <interactant intactId="EBI-12179105">
        <id>O75425</id>
        <label>MOSPD3</label>
    </interactant>
    <organismsDiffer>false</organismsDiffer>
    <experiments>3</experiments>
</comment>
<comment type="interaction">
    <interactant intactId="EBI-10192441">
        <id>Q86VR2</id>
    </interactant>
    <interactant intactId="EBI-10262547">
        <id>Q8IXM6</id>
        <label>NRM</label>
    </interactant>
    <organismsDiffer>false</organismsDiffer>
    <experiments>3</experiments>
</comment>
<comment type="interaction">
    <interactant intactId="EBI-10192441">
        <id>Q86VR2</id>
    </interactant>
    <interactant intactId="EBI-748974">
        <id>Q96CV9</id>
        <label>OPTN</label>
    </interactant>
    <organismsDiffer>false</organismsDiffer>
    <experiments>3</experiments>
</comment>
<comment type="interaction">
    <interactant intactId="EBI-10192441">
        <id>Q86VR2</id>
    </interactant>
    <interactant intactId="EBI-11075081">
        <id>Q53FV1</id>
        <label>ORMDL2</label>
    </interactant>
    <organismsDiffer>false</organismsDiffer>
    <experiments>3</experiments>
</comment>
<comment type="interaction">
    <interactant intactId="EBI-10192441">
        <id>Q86VR2</id>
    </interactant>
    <interactant intactId="EBI-721750">
        <id>Q8N138</id>
        <label>ORMDL3</label>
    </interactant>
    <organismsDiffer>false</organismsDiffer>
    <experiments>3</experiments>
</comment>
<comment type="interaction">
    <interactant intactId="EBI-10192441">
        <id>Q86VR2</id>
    </interactant>
    <interactant intactId="EBI-6916492">
        <id>Q9NUU6</id>
        <label>OTULINL</label>
    </interactant>
    <organismsDiffer>false</organismsDiffer>
    <experiments>3</experiments>
</comment>
<comment type="interaction">
    <interactant intactId="EBI-10192441">
        <id>Q86VR2</id>
    </interactant>
    <interactant intactId="EBI-12257782">
        <id>Q99640-2</id>
        <label>PKMYT1</label>
    </interactant>
    <organismsDiffer>false</organismsDiffer>
    <experiments>3</experiments>
</comment>
<comment type="interaction">
    <interactant intactId="EBI-10192441">
        <id>Q86VR2</id>
    </interactant>
    <interactant intactId="EBI-608347">
        <id>Q04941</id>
        <label>PLP2</label>
    </interactant>
    <organismsDiffer>false</organismsDiffer>
    <experiments>3</experiments>
</comment>
<comment type="interaction">
    <interactant intactId="EBI-10192441">
        <id>Q86VR2</id>
    </interactant>
    <interactant intactId="EBI-11721828">
        <id>Q8IY26</id>
        <label>PLPP6</label>
    </interactant>
    <organismsDiffer>false</organismsDiffer>
    <experiments>3</experiments>
</comment>
<comment type="interaction">
    <interactant intactId="EBI-10192441">
        <id>Q86VR2</id>
    </interactant>
    <interactant intactId="EBI-8652812">
        <id>P54315</id>
        <label>PNLIPRP1</label>
    </interactant>
    <organismsDiffer>false</organismsDiffer>
    <experiments>3</experiments>
</comment>
<comment type="interaction">
    <interactant intactId="EBI-10192441">
        <id>Q86VR2</id>
    </interactant>
    <interactant intactId="EBI-2506064">
        <id>O60831</id>
        <label>PRAF2</label>
    </interactant>
    <organismsDiffer>false</organismsDiffer>
    <experiments>3</experiments>
</comment>
<comment type="interaction">
    <interactant intactId="EBI-10192441">
        <id>Q86VR2</id>
    </interactant>
    <interactant intactId="EBI-712367">
        <id>Q9UI14</id>
        <label>RABAC1</label>
    </interactant>
    <organismsDiffer>false</organismsDiffer>
    <experiments>3</experiments>
</comment>
<comment type="interaction">
    <interactant intactId="EBI-10192441">
        <id>Q86VR2</id>
    </interactant>
    <interactant intactId="EBI-14065960">
        <id>Q96HR9-2</id>
        <label>REEP6</label>
    </interactant>
    <organismsDiffer>false</organismsDiffer>
    <experiments>3</experiments>
</comment>
<comment type="interaction">
    <interactant intactId="EBI-10192441">
        <id>Q86VR2</id>
    </interactant>
    <interactant intactId="EBI-8636004">
        <id>Q96GQ5</id>
        <label>RUSF1</label>
    </interactant>
    <organismsDiffer>false</organismsDiffer>
    <experiments>3</experiments>
</comment>
<comment type="interaction">
    <interactant intactId="EBI-10192441">
        <id>Q86VR2</id>
    </interactant>
    <interactant intactId="EBI-2684237">
        <id>O00767</id>
        <label>SCD</label>
    </interactant>
    <organismsDiffer>false</organismsDiffer>
    <experiments>3</experiments>
</comment>
<comment type="interaction">
    <interactant intactId="EBI-10192441">
        <id>Q86VR2</id>
    </interactant>
    <interactant intactId="EBI-8652744">
        <id>Q96IW7</id>
        <label>SEC22A</label>
    </interactant>
    <organismsDiffer>false</organismsDiffer>
    <experiments>5</experiments>
</comment>
<comment type="interaction">
    <interactant intactId="EBI-10192441">
        <id>Q86VR2</id>
    </interactant>
    <interactant intactId="EBI-714881">
        <id>Q9HC62</id>
        <label>SENP2</label>
    </interactant>
    <organismsDiffer>false</organismsDiffer>
    <experiments>3</experiments>
</comment>
<comment type="interaction">
    <interactant intactId="EBI-10192441">
        <id>Q86VR2</id>
    </interactant>
    <interactant intactId="EBI-749270">
        <id>Q8N6R1</id>
        <label>SERP2</label>
    </interactant>
    <organismsDiffer>false</organismsDiffer>
    <experiments>3</experiments>
</comment>
<comment type="interaction">
    <interactant intactId="EBI-10192441">
        <id>Q86VR2</id>
    </interactant>
    <interactant intactId="EBI-2854842">
        <id>Q8WV19</id>
        <label>SFT2D1</label>
    </interactant>
    <organismsDiffer>false</organismsDiffer>
    <experiments>3</experiments>
</comment>
<comment type="interaction">
    <interactant intactId="EBI-10192441">
        <id>Q86VR2</id>
    </interactant>
    <interactant intactId="EBI-1171999">
        <id>Q9BWM7</id>
        <label>SFXN3</label>
    </interactant>
    <organismsDiffer>false</organismsDiffer>
    <experiments>5</experiments>
</comment>
<comment type="interaction">
    <interactant intactId="EBI-10192441">
        <id>Q86VR2</id>
    </interactant>
    <interactant intactId="EBI-10294651">
        <id>Q99726</id>
        <label>SLC30A3</label>
    </interactant>
    <organismsDiffer>false</organismsDiffer>
    <experiments>3</experiments>
</comment>
<comment type="interaction">
    <interactant intactId="EBI-10192441">
        <id>Q86VR2</id>
    </interactant>
    <interactant intactId="EBI-12956703">
        <id>Q13433-2</id>
        <label>SLC39A6</label>
    </interactant>
    <organismsDiffer>false</organismsDiffer>
    <experiments>3</experiments>
</comment>
<comment type="interaction">
    <interactant intactId="EBI-10192441">
        <id>Q86VR2</id>
    </interactant>
    <interactant intactId="EBI-8640191">
        <id>Q9NRQ5</id>
        <label>SMCO4</label>
    </interactant>
    <organismsDiffer>false</organismsDiffer>
    <experiments>3</experiments>
</comment>
<comment type="interaction">
    <interactant intactId="EBI-10192441">
        <id>Q86VR2</id>
    </interactant>
    <interactant intactId="EBI-12188413">
        <id>B2RUZ4</id>
        <label>SMIM1</label>
    </interactant>
    <organismsDiffer>false</organismsDiffer>
    <experiments>3</experiments>
</comment>
<comment type="interaction">
    <interactant intactId="EBI-10192441">
        <id>Q86VR2</id>
    </interactant>
    <interactant intactId="EBI-6083058">
        <id>Q9ULZ2</id>
        <label>STAP1</label>
    </interactant>
    <organismsDiffer>false</organismsDiffer>
    <experiments>8</experiments>
</comment>
<comment type="interaction">
    <interactant intactId="EBI-10192441">
        <id>Q86VR2</id>
    </interactant>
    <interactant intactId="EBI-714206">
        <id>Q13190</id>
        <label>STX5</label>
    </interactant>
    <organismsDiffer>false</organismsDiffer>
    <experiments>3</experiments>
</comment>
<comment type="interaction">
    <interactant intactId="EBI-10192441">
        <id>Q86VR2</id>
    </interactant>
    <interactant intactId="EBI-3221827">
        <id>O15400</id>
        <label>STX7</label>
    </interactant>
    <organismsDiffer>false</organismsDiffer>
    <experiments>3</experiments>
</comment>
<comment type="interaction">
    <interactant intactId="EBI-10192441">
        <id>Q86VR2</id>
    </interactant>
    <interactant intactId="EBI-727240">
        <id>Q9UNK0</id>
        <label>STX8</label>
    </interactant>
    <organismsDiffer>false</organismsDiffer>
    <experiments>5</experiments>
</comment>
<comment type="interaction">
    <interactant intactId="EBI-10192441">
        <id>Q86VR2</id>
    </interactant>
    <interactant intactId="EBI-12187159">
        <id>O43759-2</id>
        <label>SYNGR1</label>
    </interactant>
    <organismsDiffer>false</organismsDiffer>
    <experiments>3</experiments>
</comment>
<comment type="interaction">
    <interactant intactId="EBI-10192441">
        <id>Q86VR2</id>
    </interactant>
    <interactant intactId="EBI-702328">
        <id>Q969Z0</id>
        <label>TBRG4</label>
    </interactant>
    <organismsDiffer>false</organismsDiffer>
    <experiments>3</experiments>
</comment>
<comment type="interaction">
    <interactant intactId="EBI-10192441">
        <id>Q86VR2</id>
    </interactant>
    <interactant intactId="EBI-710310">
        <id>Q15560</id>
        <label>TCEA2</label>
    </interactant>
    <organismsDiffer>false</organismsDiffer>
    <experiments>3</experiments>
</comment>
<comment type="interaction">
    <interactant intactId="EBI-10192441">
        <id>Q86VR2</id>
    </interactant>
    <interactant intactId="EBI-2877718">
        <id>Q9NZ01</id>
        <label>TECR</label>
    </interactant>
    <organismsDiffer>false</organismsDiffer>
    <experiments>3</experiments>
</comment>
<comment type="interaction">
    <interactant intactId="EBI-10192441">
        <id>Q86VR2</id>
    </interactant>
    <interactant intactId="EBI-8644968">
        <id>Q9NV29</id>
        <label>TMEM100</label>
    </interactant>
    <organismsDiffer>false</organismsDiffer>
    <experiments>3</experiments>
</comment>
<comment type="interaction">
    <interactant intactId="EBI-10192441">
        <id>Q86VR2</id>
    </interactant>
    <interactant intactId="EBI-723946">
        <id>P17152</id>
        <label>TMEM11</label>
    </interactant>
    <organismsDiffer>false</organismsDiffer>
    <experiments>3</experiments>
</comment>
<comment type="interaction">
    <interactant intactId="EBI-10192441">
        <id>Q86VR2</id>
    </interactant>
    <interactant intactId="EBI-10171534">
        <id>A0PK00</id>
        <label>TMEM120B</label>
    </interactant>
    <organismsDiffer>false</organismsDiffer>
    <experiments>3</experiments>
</comment>
<comment type="interaction">
    <interactant intactId="EBI-10192441">
        <id>Q86VR2</id>
    </interactant>
    <interactant intactId="EBI-10694905">
        <id>Q5BJH2-2</id>
        <label>TMEM128</label>
    </interactant>
    <organismsDiffer>false</organismsDiffer>
    <experiments>3</experiments>
</comment>
<comment type="interaction">
    <interactant intactId="EBI-10192441">
        <id>Q86VR2</id>
    </interactant>
    <interactant intactId="EBI-2800645">
        <id>Q96HP8</id>
        <label>TMEM176A</label>
    </interactant>
    <organismsDiffer>false</organismsDiffer>
    <experiments>3</experiments>
</comment>
<comment type="interaction">
    <interactant intactId="EBI-10192441">
        <id>Q86VR2</id>
    </interactant>
    <interactant intactId="EBI-17196383">
        <id>Q96B42-2</id>
        <label>TMEM18</label>
    </interactant>
    <organismsDiffer>false</organismsDiffer>
    <experiments>3</experiments>
</comment>
<comment type="interaction">
    <interactant intactId="EBI-10192441">
        <id>Q86VR2</id>
    </interactant>
    <interactant intactId="EBI-12274070">
        <id>Q969S6</id>
        <label>TMEM203</label>
    </interactant>
    <organismsDiffer>false</organismsDiffer>
    <experiments>3</experiments>
</comment>
<comment type="interaction">
    <interactant intactId="EBI-10192441">
        <id>Q86VR2</id>
    </interactant>
    <interactant intactId="EBI-10173151">
        <id>A2RU14</id>
        <label>TMEM218</label>
    </interactant>
    <organismsDiffer>false</organismsDiffer>
    <experiments>3</experiments>
</comment>
<comment type="interaction">
    <interactant intactId="EBI-10192441">
        <id>Q86VR2</id>
    </interactant>
    <interactant intactId="EBI-347385">
        <id>Q9H0R3</id>
        <label>TMEM222</label>
    </interactant>
    <organismsDiffer>false</organismsDiffer>
    <experiments>3</experiments>
</comment>
<comment type="interaction">
    <interactant intactId="EBI-10192441">
        <id>Q86VR2</id>
    </interactant>
    <interactant intactId="EBI-10982110">
        <id>Q96Q45-2</id>
        <label>TMEM237</label>
    </interactant>
    <organismsDiffer>false</organismsDiffer>
    <experiments>3</experiments>
</comment>
<comment type="interaction">
    <interactant intactId="EBI-10192441">
        <id>Q86VR2</id>
    </interactant>
    <interactant intactId="EBI-11528917">
        <id>Q8WW34-2</id>
        <label>TMEM239</label>
    </interactant>
    <organismsDiffer>false</organismsDiffer>
    <experiments>3</experiments>
</comment>
<comment type="interaction">
    <interactant intactId="EBI-10192441">
        <id>Q86VR2</id>
    </interactant>
    <interactant intactId="EBI-12887458">
        <id>Q9BU79</id>
        <label>TMEM243</label>
    </interactant>
    <organismsDiffer>false</organismsDiffer>
    <experiments>3</experiments>
</comment>
<comment type="interaction">
    <interactant intactId="EBI-10192441">
        <id>Q86VR2</id>
    </interactant>
    <interactant intactId="EBI-11956809">
        <id>Q8TBM7</id>
        <label>TMEM254</label>
    </interactant>
    <organismsDiffer>false</organismsDiffer>
    <experiments>3</experiments>
</comment>
<comment type="interaction">
    <interactant intactId="EBI-10192441">
        <id>Q86VR2</id>
    </interactant>
    <interactant intactId="EBI-12038591">
        <id>Q69YG0</id>
        <label>TMEM42</label>
    </interactant>
    <organismsDiffer>false</organismsDiffer>
    <experiments>3</experiments>
</comment>
<comment type="interaction">
    <interactant intactId="EBI-10192441">
        <id>Q86VR2</id>
    </interactant>
    <interactant intactId="EBI-2852148">
        <id>Q9H2L4</id>
        <label>TMEM60</label>
    </interactant>
    <organismsDiffer>false</organismsDiffer>
    <experiments>3</experiments>
</comment>
<comment type="interaction">
    <interactant intactId="EBI-10192441">
        <id>Q86VR2</id>
    </interactant>
    <interactant intactId="EBI-6656213">
        <id>Q6PI78</id>
        <label>TMEM65</label>
    </interactant>
    <organismsDiffer>false</organismsDiffer>
    <experiments>3</experiments>
</comment>
<comment type="interaction">
    <interactant intactId="EBI-10192441">
        <id>Q86VR2</id>
    </interactant>
    <interactant intactId="EBI-11724433">
        <id>Q6ZT21</id>
        <label>TMPPE</label>
    </interactant>
    <organismsDiffer>false</organismsDiffer>
    <experiments>3</experiments>
</comment>
<comment type="interaction">
    <interactant intactId="EBI-10192441">
        <id>Q86VR2</id>
    </interactant>
    <interactant intactId="EBI-17249488">
        <id>Q6ZUI0</id>
        <label>TPRG1</label>
    </interactant>
    <organismsDiffer>false</organismsDiffer>
    <experiments>3</experiments>
</comment>
<comment type="interaction">
    <interactant intactId="EBI-10192441">
        <id>Q86VR2</id>
    </interactant>
    <interactant intactId="EBI-12003468">
        <id>A0AVG3</id>
        <label>TSNARE1</label>
    </interactant>
    <organismsDiffer>false</organismsDiffer>
    <experiments>3</experiments>
</comment>
<comment type="interaction">
    <interactant intactId="EBI-10192441">
        <id>Q86VR2</id>
    </interactant>
    <interactant intactId="EBI-12195249">
        <id>Q5TGU0</id>
        <label>TSPO2</label>
    </interactant>
    <organismsDiffer>false</organismsDiffer>
    <experiments>5</experiments>
</comment>
<comment type="interaction">
    <interactant intactId="EBI-10192441">
        <id>Q86VR2</id>
    </interactant>
    <interactant intactId="EBI-2819725">
        <id>Q9Y5Z9</id>
        <label>UBIAD1</label>
    </interactant>
    <organismsDiffer>false</organismsDiffer>
    <experiments>3</experiments>
</comment>
<comment type="interaction">
    <interactant intactId="EBI-10192441">
        <id>Q86VR2</id>
    </interactant>
    <interactant intactId="EBI-12097582">
        <id>P23763-3</id>
        <label>VAMP1</label>
    </interactant>
    <organismsDiffer>false</organismsDiffer>
    <experiments>3</experiments>
</comment>
<comment type="interaction">
    <interactant intactId="EBI-10192441">
        <id>Q86VR2</id>
    </interactant>
    <interactant intactId="EBI-722343">
        <id>Q15836</id>
        <label>VAMP3</label>
    </interactant>
    <organismsDiffer>false</organismsDiffer>
    <experiments>3</experiments>
</comment>
<comment type="interaction">
    <interactant intactId="EBI-10192441">
        <id>Q86VR2</id>
    </interactant>
    <interactant intactId="EBI-744953">
        <id>O75379</id>
        <label>VAMP4</label>
    </interactant>
    <organismsDiffer>false</organismsDiffer>
    <experiments>3</experiments>
</comment>
<comment type="interaction">
    <interactant intactId="EBI-10192441">
        <id>Q86VR2</id>
    </interactant>
    <interactant intactId="EBI-10191195">
        <id>O95183</id>
        <label>VAMP5</label>
    </interactant>
    <organismsDiffer>false</organismsDiffer>
    <experiments>3</experiments>
</comment>
<comment type="interaction">
    <interactant intactId="EBI-10192441">
        <id>Q86VR2</id>
    </interactant>
    <interactant intactId="EBI-1059156">
        <id>Q9P0L0</id>
        <label>VAPA</label>
    </interactant>
    <organismsDiffer>false</organismsDiffer>
    <experiments>3</experiments>
</comment>
<comment type="interaction">
    <interactant intactId="EBI-10192441">
        <id>Q86VR2</id>
    </interactant>
    <interactant intactId="EBI-1188298">
        <id>O95292</id>
        <label>VAPB</label>
    </interactant>
    <organismsDiffer>false</organismsDiffer>
    <experiments>3</experiments>
</comment>
<comment type="interaction">
    <interactant intactId="EBI-10192441">
        <id>Q86VR2</id>
    </interactant>
    <interactant intactId="EBI-7850136">
        <id>Q9Y548</id>
        <label>YIPF1</label>
    </interactant>
    <organismsDiffer>false</organismsDiffer>
    <experiments>3</experiments>
</comment>
<comment type="interaction">
    <interactant intactId="EBI-10192441">
        <id>Q86VR2</id>
    </interactant>
    <interactant intactId="EBI-751210">
        <id>Q96EC8</id>
        <label>YIPF6</label>
    </interactant>
    <organismsDiffer>false</organismsDiffer>
    <experiments>5</experiments>
</comment>
<comment type="interaction">
    <interactant intactId="EBI-10192441">
        <id>Q86VR2</id>
    </interactant>
    <interactant intactId="EBI-25475917">
        <id>P0DTD3</id>
        <label>9c</label>
    </interactant>
    <organismsDiffer>true</organismsDiffer>
    <experiments>3</experiments>
</comment>
<comment type="subcellular location">
    <subcellularLocation>
        <location evidence="5 6">Endoplasmic reticulum membrane</location>
        <topology evidence="2">Multi-pass membrane protein</topology>
    </subcellularLocation>
    <text evidence="5">Localizes preferentially to endoplasmic reticulum tubules and sheet edges.</text>
</comment>
<comment type="alternative products">
    <event type="alternative splicing"/>
    <isoform>
        <id>Q86VR2-1</id>
        <name>1</name>
        <sequence type="displayed"/>
    </isoform>
    <isoform>
        <id>Q86VR2-2</id>
        <name>2</name>
        <sequence type="described" ref="VSP_056991"/>
    </isoform>
</comment>
<comment type="induction">
    <text evidence="5">Induced by amino acid starvation but not by endoplasmic reticulum stress.</text>
</comment>
<comment type="domain">
    <text evidence="4">The LIR motif interacts with ATG8 family proteins.</text>
</comment>
<comment type="similarity">
    <text evidence="8">Belongs to the RETREG family.</text>
</comment>
<protein>
    <recommendedName>
        <fullName>Reticulophagy regulator 3</fullName>
    </recommendedName>
</protein>
<keyword id="KW-0007">Acetylation</keyword>
<keyword id="KW-0025">Alternative splicing</keyword>
<keyword id="KW-0072">Autophagy</keyword>
<keyword id="KW-0256">Endoplasmic reticulum</keyword>
<keyword id="KW-0472">Membrane</keyword>
<keyword id="KW-0597">Phosphoprotein</keyword>
<keyword id="KW-1267">Proteomics identification</keyword>
<keyword id="KW-1185">Reference proteome</keyword>
<keyword id="KW-0812">Transmembrane</keyword>
<keyword id="KW-1133">Transmembrane helix</keyword>
<sequence>MAEAEGVPTTPGPASGSTFRGRRDVSGSWERDQQVEAAQRALVEVLGPYEPLLSRVQAALVWERPARSALWCLGLNAAFWFFALTSLRLVFLLAFGLMIIVCIDQWKNKIWPEIKVPRPDALDNESWGFVHPRLLSVPELCHHVAEVWVSGTIFIRNVLLFKKQNPGKFCLLSCGILTFLAVLGRYVPGLLLSYLMLVTVMMWPLAVYHRLWDRAYVRLKPALQRLDFSVRGYMMSKQRERQLRRRALHPERAMDNHSDSEEELAAFCPQLDDSTVARELAITDSEHSDAEVSCTDNGTFNLSRGQTPLTEGSEDLDGHSDPEESFARDLPDFPSINMDPAGLDDEDDTSIGMPSLMYRSPPGAEEPQAPPASRDEAALPELLLGALPVGSNLTSNLASLVSQGMIQLALSGASQPGPSGAPAQRATRGFLRSPSSDLDTDAEGDDFELLDQSELSQLDPASSRSH</sequence>
<proteinExistence type="evidence at protein level"/>
<accession>Q86VR2</accession>
<accession>B3KR75</accession>
<organism>
    <name type="scientific">Homo sapiens</name>
    <name type="common">Human</name>
    <dbReference type="NCBI Taxonomy" id="9606"/>
    <lineage>
        <taxon>Eukaryota</taxon>
        <taxon>Metazoa</taxon>
        <taxon>Chordata</taxon>
        <taxon>Craniata</taxon>
        <taxon>Vertebrata</taxon>
        <taxon>Euteleostomi</taxon>
        <taxon>Mammalia</taxon>
        <taxon>Eutheria</taxon>
        <taxon>Euarchontoglires</taxon>
        <taxon>Primates</taxon>
        <taxon>Haplorrhini</taxon>
        <taxon>Catarrhini</taxon>
        <taxon>Hominidae</taxon>
        <taxon>Homo</taxon>
    </lineage>
</organism>
<feature type="initiator methionine" description="Removed" evidence="13 15 17">
    <location>
        <position position="1"/>
    </location>
</feature>
<feature type="chain" id="PRO_0000288469" description="Reticulophagy regulator 3">
    <location>
        <begin position="2"/>
        <end position="466"/>
    </location>
</feature>
<feature type="topological domain" description="Cytoplasmic" evidence="5">
    <location>
        <begin position="2"/>
        <end position="80"/>
    </location>
</feature>
<feature type="transmembrane region" description="Helical" evidence="2">
    <location>
        <begin position="81"/>
        <end position="101"/>
    </location>
</feature>
<feature type="topological domain" description="Lumenal" evidence="10">
    <location>
        <begin position="102"/>
        <end position="163"/>
    </location>
</feature>
<feature type="transmembrane region" description="Helical" evidence="2">
    <location>
        <begin position="164"/>
        <end position="184"/>
    </location>
</feature>
<feature type="topological domain" description="Cytoplasmic" evidence="10">
    <location>
        <begin position="185"/>
        <end position="186"/>
    </location>
</feature>
<feature type="transmembrane region" description="Helical" evidence="2">
    <location>
        <begin position="187"/>
        <end position="207"/>
    </location>
</feature>
<feature type="topological domain" description="Lumenal" evidence="10">
    <location>
        <begin position="208"/>
        <end position="381"/>
    </location>
</feature>
<feature type="transmembrane region" description="Helical" evidence="2">
    <location>
        <begin position="382"/>
        <end position="402"/>
    </location>
</feature>
<feature type="topological domain" description="Cytoplasmic" evidence="5">
    <location>
        <begin position="403"/>
        <end position="466"/>
    </location>
</feature>
<feature type="region of interest" description="Disordered" evidence="3">
    <location>
        <begin position="1"/>
        <end position="28"/>
    </location>
</feature>
<feature type="region of interest" description="Disordered" evidence="3">
    <location>
        <begin position="284"/>
        <end position="374"/>
    </location>
</feature>
<feature type="region of interest" description="Disordered" evidence="3">
    <location>
        <begin position="412"/>
        <end position="466"/>
    </location>
</feature>
<feature type="short sequence motif" description="LIR motif" evidence="9">
    <location>
        <begin position="445"/>
        <end position="450"/>
    </location>
</feature>
<feature type="compositionally biased region" description="Polar residues" evidence="3">
    <location>
        <begin position="294"/>
        <end position="310"/>
    </location>
</feature>
<feature type="compositionally biased region" description="Basic and acidic residues" evidence="3">
    <location>
        <begin position="316"/>
        <end position="331"/>
    </location>
</feature>
<feature type="compositionally biased region" description="Acidic residues" evidence="3">
    <location>
        <begin position="438"/>
        <end position="451"/>
    </location>
</feature>
<feature type="compositionally biased region" description="Polar residues" evidence="3">
    <location>
        <begin position="453"/>
        <end position="466"/>
    </location>
</feature>
<feature type="modified residue" description="N-acetylalanine" evidence="13 15 17">
    <location>
        <position position="2"/>
    </location>
</feature>
<feature type="modified residue" description="Phosphothreonine" evidence="15 18">
    <location>
        <position position="10"/>
    </location>
</feature>
<feature type="modified residue" description="Phosphoserine" evidence="16">
    <location>
        <position position="26"/>
    </location>
</feature>
<feature type="modified residue" description="Phosphoserine" evidence="12 14 15 16">
    <location>
        <position position="258"/>
    </location>
</feature>
<feature type="modified residue" description="Phosphoserine" evidence="12 14 15 16">
    <location>
        <position position="260"/>
    </location>
</feature>
<feature type="modified residue" description="Phosphothreonine" evidence="12">
    <location>
        <position position="283"/>
    </location>
</feature>
<feature type="modified residue" description="Phosphoserine" evidence="12">
    <location>
        <position position="285"/>
    </location>
</feature>
<feature type="modified residue" description="Phosphoserine" evidence="1">
    <location>
        <position position="288"/>
    </location>
</feature>
<feature type="modified residue" description="Phosphoserine" evidence="1">
    <location>
        <position position="293"/>
    </location>
</feature>
<feature type="modified residue" description="Phosphoserine" evidence="1">
    <location>
        <position position="303"/>
    </location>
</feature>
<feature type="modified residue" description="Phosphothreonine" evidence="12 14 19">
    <location>
        <position position="307"/>
    </location>
</feature>
<feature type="modified residue" description="Phosphothreonine" evidence="12 19">
    <location>
        <position position="310"/>
    </location>
</feature>
<feature type="modified residue" description="Phosphoserine" evidence="12 14 19">
    <location>
        <position position="313"/>
    </location>
</feature>
<feature type="modified residue" description="Phosphoserine" evidence="12 14 16 18 19">
    <location>
        <position position="320"/>
    </location>
</feature>
<feature type="modified residue" description="Phosphoserine" evidence="12">
    <location>
        <position position="360"/>
    </location>
</feature>
<feature type="modified residue" description="Phosphothreonine" evidence="12 14">
    <location>
        <position position="440"/>
    </location>
</feature>
<feature type="splice variant" id="VSP_056991" description="In isoform 2." evidence="7">
    <location>
        <begin position="1"/>
        <end position="195"/>
    </location>
</feature>
<feature type="mutagenesis site" description="Reduced formation of autophagosomes." evidence="5">
    <original>DDFELL</original>
    <variation>AAAAAA</variation>
    <location>
        <begin position="445"/>
        <end position="450"/>
    </location>
</feature>
<feature type="mutagenesis site" description="Abolishes interaction with ATG8 family proteins, induction of ER fragmentation and ER degradation." evidence="6">
    <original>FELL</original>
    <variation>AELA</variation>
    <location>
        <begin position="447"/>
        <end position="450"/>
    </location>
</feature>
<dbReference type="EMBL" id="AK091125">
    <property type="protein sequence ID" value="BAG52287.1"/>
    <property type="molecule type" value="mRNA"/>
</dbReference>
<dbReference type="EMBL" id="AK294791">
    <property type="protein sequence ID" value="BAG57914.1"/>
    <property type="molecule type" value="mRNA"/>
</dbReference>
<dbReference type="EMBL" id="AC067852">
    <property type="status" value="NOT_ANNOTATED_CDS"/>
    <property type="molecule type" value="Genomic_DNA"/>
</dbReference>
<dbReference type="EMBL" id="CH471152">
    <property type="protein sequence ID" value="EAW60851.1"/>
    <property type="molecule type" value="Genomic_DNA"/>
</dbReference>
<dbReference type="EMBL" id="BC049370">
    <property type="protein sequence ID" value="AAH49370.1"/>
    <property type="molecule type" value="mRNA"/>
</dbReference>
<dbReference type="CCDS" id="CCDS11432.1">
    <molecule id="Q86VR2-1"/>
</dbReference>
<dbReference type="RefSeq" id="NP_835227.1">
    <molecule id="Q86VR2-1"/>
    <property type="nucleotide sequence ID" value="NM_178126.4"/>
</dbReference>
<dbReference type="BioGRID" id="127817">
    <property type="interactions" value="245"/>
</dbReference>
<dbReference type="DIP" id="DIP-61578N"/>
<dbReference type="FunCoup" id="Q86VR2">
    <property type="interactions" value="1170"/>
</dbReference>
<dbReference type="IntAct" id="Q86VR2">
    <property type="interactions" value="209"/>
</dbReference>
<dbReference type="MINT" id="Q86VR2"/>
<dbReference type="STRING" id="9606.ENSP00000309432"/>
<dbReference type="iPTMnet" id="Q86VR2"/>
<dbReference type="PhosphoSitePlus" id="Q86VR2"/>
<dbReference type="SwissPalm" id="Q86VR2"/>
<dbReference type="BioMuta" id="RETREG3"/>
<dbReference type="DMDM" id="74727607"/>
<dbReference type="jPOST" id="Q86VR2"/>
<dbReference type="MassIVE" id="Q86VR2"/>
<dbReference type="PaxDb" id="9606-ENSP00000309432"/>
<dbReference type="PeptideAtlas" id="Q86VR2"/>
<dbReference type="ProteomicsDB" id="3584"/>
<dbReference type="ProteomicsDB" id="70060">
    <molecule id="Q86VR2-1"/>
</dbReference>
<dbReference type="Pumba" id="Q86VR2"/>
<dbReference type="Antibodypedia" id="3087">
    <property type="antibodies" value="70 antibodies from 16 providers"/>
</dbReference>
<dbReference type="DNASU" id="162427"/>
<dbReference type="Ensembl" id="ENST00000309428.10">
    <molecule id="Q86VR2-1"/>
    <property type="protein sequence ID" value="ENSP00000309432.4"/>
    <property type="gene ID" value="ENSG00000141699.11"/>
</dbReference>
<dbReference type="GeneID" id="162427"/>
<dbReference type="KEGG" id="hsa:162427"/>
<dbReference type="MANE-Select" id="ENST00000309428.10">
    <property type="protein sequence ID" value="ENSP00000309432.4"/>
    <property type="RefSeq nucleotide sequence ID" value="NM_178126.4"/>
    <property type="RefSeq protein sequence ID" value="NP_835227.1"/>
</dbReference>
<dbReference type="UCSC" id="uc060fkv.1">
    <molecule id="Q86VR2-1"/>
    <property type="organism name" value="human"/>
</dbReference>
<dbReference type="AGR" id="HGNC:27258"/>
<dbReference type="CTD" id="162427"/>
<dbReference type="DisGeNET" id="162427"/>
<dbReference type="GeneCards" id="RETREG3"/>
<dbReference type="HGNC" id="HGNC:27258">
    <property type="gene designation" value="RETREG3"/>
</dbReference>
<dbReference type="HPA" id="ENSG00000141699">
    <property type="expression patterns" value="Low tissue specificity"/>
</dbReference>
<dbReference type="MIM" id="616498">
    <property type="type" value="gene"/>
</dbReference>
<dbReference type="neXtProt" id="NX_Q86VR2"/>
<dbReference type="OpenTargets" id="ENSG00000141699"/>
<dbReference type="PharmGKB" id="PA162386207"/>
<dbReference type="VEuPathDB" id="HostDB:ENSG00000141699"/>
<dbReference type="eggNOG" id="ENOG502QPTN">
    <property type="taxonomic scope" value="Eukaryota"/>
</dbReference>
<dbReference type="GeneTree" id="ENSGT00940000161349"/>
<dbReference type="HOGENOM" id="CLU_036265_0_0_1"/>
<dbReference type="InParanoid" id="Q86VR2"/>
<dbReference type="OMA" id="HRVFQHV"/>
<dbReference type="OrthoDB" id="10029527at2759"/>
<dbReference type="PAN-GO" id="Q86VR2">
    <property type="GO annotations" value="0 GO annotations based on evolutionary models"/>
</dbReference>
<dbReference type="PhylomeDB" id="Q86VR2"/>
<dbReference type="TreeFam" id="TF329111"/>
<dbReference type="PathwayCommons" id="Q86VR2"/>
<dbReference type="SignaLink" id="Q86VR2"/>
<dbReference type="SIGNOR" id="Q86VR2"/>
<dbReference type="BioGRID-ORCS" id="162427">
    <property type="hits" value="28 hits in 1179 CRISPR screens"/>
</dbReference>
<dbReference type="ChiTaRS" id="FAM134C">
    <property type="organism name" value="human"/>
</dbReference>
<dbReference type="GeneWiki" id="FAM134C"/>
<dbReference type="GenomeRNAi" id="162427"/>
<dbReference type="Pharos" id="Q86VR2">
    <property type="development level" value="Tdark"/>
</dbReference>
<dbReference type="PRO" id="PR:Q86VR2"/>
<dbReference type="Proteomes" id="UP000005640">
    <property type="component" value="Chromosome 17"/>
</dbReference>
<dbReference type="RNAct" id="Q86VR2">
    <property type="molecule type" value="protein"/>
</dbReference>
<dbReference type="Bgee" id="ENSG00000141699">
    <property type="expression patterns" value="Expressed in parotid gland and 211 other cell types or tissues"/>
</dbReference>
<dbReference type="ExpressionAtlas" id="Q86VR2">
    <property type="expression patterns" value="baseline and differential"/>
</dbReference>
<dbReference type="GO" id="GO:0005789">
    <property type="term" value="C:endoplasmic reticulum membrane"/>
    <property type="evidence" value="ECO:0007669"/>
    <property type="project" value="UniProtKB-SubCell"/>
</dbReference>
<dbReference type="GO" id="GO:0071782">
    <property type="term" value="C:endoplasmic reticulum tubular network"/>
    <property type="evidence" value="ECO:0000314"/>
    <property type="project" value="UniProtKB"/>
</dbReference>
<dbReference type="GO" id="GO:0032991">
    <property type="term" value="C:protein-containing complex"/>
    <property type="evidence" value="ECO:0000314"/>
    <property type="project" value="MGI"/>
</dbReference>
<dbReference type="GO" id="GO:0140506">
    <property type="term" value="F:endoplasmic reticulum-autophagosome adaptor activity"/>
    <property type="evidence" value="ECO:0007669"/>
    <property type="project" value="Ensembl"/>
</dbReference>
<dbReference type="GO" id="GO:0030574">
    <property type="term" value="P:collagen catabolic process"/>
    <property type="evidence" value="ECO:0007669"/>
    <property type="project" value="Ensembl"/>
</dbReference>
<dbReference type="GO" id="GO:0071786">
    <property type="term" value="P:endoplasmic reticulum tubular network organization"/>
    <property type="evidence" value="ECO:0000315"/>
    <property type="project" value="UniProtKB"/>
</dbReference>
<dbReference type="GO" id="GO:0010976">
    <property type="term" value="P:positive regulation of neuron projection development"/>
    <property type="evidence" value="ECO:0000315"/>
    <property type="project" value="UniProtKB"/>
</dbReference>
<dbReference type="GO" id="GO:0061709">
    <property type="term" value="P:reticulophagy"/>
    <property type="evidence" value="ECO:0000315"/>
    <property type="project" value="UniProtKB"/>
</dbReference>
<dbReference type="CDD" id="cd22562">
    <property type="entry name" value="RETR3_RHD"/>
    <property type="match status" value="1"/>
</dbReference>
<dbReference type="InterPro" id="IPR055258">
    <property type="entry name" value="RETR3_RHD"/>
</dbReference>
<dbReference type="InterPro" id="IPR043384">
    <property type="entry name" value="RETREG1/3"/>
</dbReference>
<dbReference type="PANTHER" id="PTHR28659">
    <property type="entry name" value="RETICULON-LIKE PROTEIN"/>
    <property type="match status" value="1"/>
</dbReference>
<dbReference type="PANTHER" id="PTHR28659:SF1">
    <property type="entry name" value="RETICULOPHAGY REGULATOR 3"/>
    <property type="match status" value="1"/>
</dbReference>
<dbReference type="Pfam" id="PF24456">
    <property type="entry name" value="RHD_RETREG1-3"/>
    <property type="match status" value="1"/>
</dbReference>
<evidence type="ECO:0000250" key="1">
    <source>
        <dbReference type="UniProtKB" id="Q9CQV4"/>
    </source>
</evidence>
<evidence type="ECO:0000255" key="2"/>
<evidence type="ECO:0000256" key="3">
    <source>
        <dbReference type="SAM" id="MobiDB-lite"/>
    </source>
</evidence>
<evidence type="ECO:0000269" key="4">
    <source>
    </source>
</evidence>
<evidence type="ECO:0000269" key="5">
    <source>
    </source>
</evidence>
<evidence type="ECO:0000269" key="6">
    <source>
    </source>
</evidence>
<evidence type="ECO:0000303" key="7">
    <source>
    </source>
</evidence>
<evidence type="ECO:0000305" key="8"/>
<evidence type="ECO:0000305" key="9">
    <source>
    </source>
</evidence>
<evidence type="ECO:0000305" key="10">
    <source>
    </source>
</evidence>
<evidence type="ECO:0000312" key="11">
    <source>
        <dbReference type="HGNC" id="HGNC:27258"/>
    </source>
</evidence>
<evidence type="ECO:0007744" key="12">
    <source>
    </source>
</evidence>
<evidence type="ECO:0007744" key="13">
    <source>
    </source>
</evidence>
<evidence type="ECO:0007744" key="14">
    <source>
    </source>
</evidence>
<evidence type="ECO:0007744" key="15">
    <source>
    </source>
</evidence>
<evidence type="ECO:0007744" key="16">
    <source>
    </source>
</evidence>
<evidence type="ECO:0007744" key="17">
    <source>
    </source>
</evidence>
<evidence type="ECO:0007744" key="18">
    <source>
    </source>
</evidence>
<evidence type="ECO:0007744" key="19">
    <source>
    </source>
</evidence>
<gene>
    <name evidence="11" type="primary">RETREG3</name>
    <name type="synonym">FAM134C</name>
</gene>